<reference key="1">
    <citation type="journal article" date="2009" name="PLoS Biol.">
        <title>Lineage-specific biology revealed by a finished genome assembly of the mouse.</title>
        <authorList>
            <person name="Church D.M."/>
            <person name="Goodstadt L."/>
            <person name="Hillier L.W."/>
            <person name="Zody M.C."/>
            <person name="Goldstein S."/>
            <person name="She X."/>
            <person name="Bult C.J."/>
            <person name="Agarwala R."/>
            <person name="Cherry J.L."/>
            <person name="DiCuccio M."/>
            <person name="Hlavina W."/>
            <person name="Kapustin Y."/>
            <person name="Meric P."/>
            <person name="Maglott D."/>
            <person name="Birtle Z."/>
            <person name="Marques A.C."/>
            <person name="Graves T."/>
            <person name="Zhou S."/>
            <person name="Teague B."/>
            <person name="Potamousis K."/>
            <person name="Churas C."/>
            <person name="Place M."/>
            <person name="Herschleb J."/>
            <person name="Runnheim R."/>
            <person name="Forrest D."/>
            <person name="Amos-Landgraf J."/>
            <person name="Schwartz D.C."/>
            <person name="Cheng Z."/>
            <person name="Lindblad-Toh K."/>
            <person name="Eichler E.E."/>
            <person name="Ponting C.P."/>
        </authorList>
    </citation>
    <scope>NUCLEOTIDE SEQUENCE [LARGE SCALE GENOMIC DNA]</scope>
    <source>
        <strain>C57BL/6J</strain>
    </source>
</reference>
<reference key="2">
    <citation type="journal article" date="2004" name="Genome Res.">
        <title>The status, quality, and expansion of the NIH full-length cDNA project: the Mammalian Gene Collection (MGC).</title>
        <authorList>
            <consortium name="The MGC Project Team"/>
        </authorList>
    </citation>
    <scope>NUCLEOTIDE SEQUENCE [LARGE SCALE MRNA]</scope>
    <source>
        <strain>Czech II</strain>
        <tissue>Mammary tumor</tissue>
    </source>
</reference>
<reference key="3">
    <citation type="journal article" date="2001" name="Oncogene">
        <title>The polycomb protein MPc3 interacts with AF9, an MLL fusion partner in t(9;11)(p22;q23) acute leukemias.</title>
        <authorList>
            <person name="Hemenway C.S."/>
            <person name="de Erkenez A.C."/>
            <person name="Gould G.C.D."/>
        </authorList>
    </citation>
    <scope>NUCLEOTIDE SEQUENCE [MRNA] OF 10-569</scope>
    <scope>SUBCELLULAR LOCATION</scope>
    <scope>TISSUE SPECIFICITY</scope>
    <scope>INTERACTION WITH CBX8</scope>
    <source>
        <strain>Swiss Webster / NIH</strain>
    </source>
</reference>
<reference key="4">
    <citation type="journal article" date="2010" name="Cell">
        <title>A tissue-specific atlas of mouse protein phosphorylation and expression.</title>
        <authorList>
            <person name="Huttlin E.L."/>
            <person name="Jedrychowski M.P."/>
            <person name="Elias J.E."/>
            <person name="Goswami T."/>
            <person name="Rad R."/>
            <person name="Beausoleil S.A."/>
            <person name="Villen J."/>
            <person name="Haas W."/>
            <person name="Sowa M.E."/>
            <person name="Gygi S.P."/>
        </authorList>
    </citation>
    <scope>PHOSPHORYLATION [LARGE SCALE ANALYSIS] AT SER-413</scope>
    <scope>IDENTIFICATION BY MASS SPECTROMETRY [LARGE SCALE ANALYSIS]</scope>
    <source>
        <tissue>Testis</tissue>
    </source>
</reference>
<proteinExistence type="evidence at protein level"/>
<accession>A2AM29</accession>
<accession>Q8VDR6</accession>
<accession>Q99MK4</accession>
<gene>
    <name type="primary">Mllt3</name>
    <name type="synonym">Af9</name>
</gene>
<comment type="function">
    <text evidence="1">Chromatin reader component of the super elongation complex (SEC), a complex required to increase the catalytic rate of RNA polymerase II transcription by suppressing transient pausing by the polymerase at multiple sites along the DNA. Specifically recognizes and binds acylated histone H3, with a preference for histone H3 that is crotonylated. Crotonylation marks active promoters and enhancers and confers resistance to transcriptional repressors. Recognizes and binds histone H3 crotonylated at 'Lys-9' (H3K9cr), and with slightly lower affinity histone H3 crotonylated at 'Lys-18' (H3K18cr). Also recognizes and binds histone H3 acetylated and butyrylated at 'Lys-9' (H3K9ac and H3K9bu, respectively), but with lower affinity than crotonylated histone H3. In the SEC complex, MLLT3 is required to recruit the complex to crotonylated histones. Recruitment of the SEC complex to crotonylated histones promotes recruitment of DOT1L on active chromatin to deposit histone H3 'Lys-79' methylation (H3K79me). Plays a key role in hematopoietic stem cell (HSC) maintenance by preserving, rather than conferring, HSC stemness. Acts by binding to the transcription start site of active genes in HSCs and sustaining level of H3K79me2, probably by recruiting DOT1L.</text>
</comment>
<comment type="subunit">
    <text evidence="1 5">Component of the super elongation complex (SEC), at least composed of EAF1, EAF2, CDK9, MLLT3/AF9, AFF (AFF1 or AFF4), the P-TEFb complex and ELL (ELL, ELL2 or ELL3) (By similarity). Interacts with BCOR (By similarity). Interacts with CBX8 (PubMed:11439343). Interacts with ALKBH4 (By similarity).</text>
</comment>
<comment type="subcellular location">
    <subcellularLocation>
        <location evidence="3 5">Nucleus</location>
    </subcellularLocation>
    <subcellularLocation>
        <location evidence="1">Chromosome</location>
    </subcellularLocation>
    <text evidence="1">Colocalizes with acylated histone H3. H3 Colocalizes with histone H3 crotonylated at 'Lys-18' (H3K18cr).</text>
</comment>
<comment type="tissue specificity">
    <text evidence="5">Ubiquitously expressed. Strong expression in the spleen.</text>
</comment>
<comment type="domain">
    <text evidence="1">The YEATS domain specifically recognizes and binds acylated histones, with a marked preference for histones that are crotonylated. Also binds histone H3 acetylated at 'Lys-9' (H3K9ac), but with lower affinity. Binds crotonylated lysine through a non-canonical pi-pi-pi stacking mechanism. The YEATS domain also binds DNA.</text>
</comment>
<keyword id="KW-0010">Activator</keyword>
<keyword id="KW-0158">Chromosome</keyword>
<keyword id="KW-0238">DNA-binding</keyword>
<keyword id="KW-1017">Isopeptide bond</keyword>
<keyword id="KW-0539">Nucleus</keyword>
<keyword id="KW-0597">Phosphoprotein</keyword>
<keyword id="KW-1185">Reference proteome</keyword>
<keyword id="KW-0804">Transcription</keyword>
<keyword id="KW-0805">Transcription regulation</keyword>
<keyword id="KW-0832">Ubl conjugation</keyword>
<dbReference type="EMBL" id="AL806533">
    <property type="status" value="NOT_ANNOTATED_CDS"/>
    <property type="molecule type" value="Genomic_DNA"/>
</dbReference>
<dbReference type="EMBL" id="AL831756">
    <property type="status" value="NOT_ANNOTATED_CDS"/>
    <property type="molecule type" value="Genomic_DNA"/>
</dbReference>
<dbReference type="EMBL" id="AL929524">
    <property type="status" value="NOT_ANNOTATED_CDS"/>
    <property type="molecule type" value="Genomic_DNA"/>
</dbReference>
<dbReference type="EMBL" id="BC021420">
    <property type="protein sequence ID" value="AAH21420.1"/>
    <property type="molecule type" value="mRNA"/>
</dbReference>
<dbReference type="EMBL" id="AF333960">
    <property type="protein sequence ID" value="AAK28536.1"/>
    <property type="molecule type" value="mRNA"/>
</dbReference>
<dbReference type="CCDS" id="CCDS38796.1"/>
<dbReference type="RefSeq" id="NP_081602.3">
    <property type="nucleotide sequence ID" value="NM_027326.3"/>
</dbReference>
<dbReference type="BMRB" id="A2AM29"/>
<dbReference type="SMR" id="A2AM29"/>
<dbReference type="BioGRID" id="213873">
    <property type="interactions" value="9"/>
</dbReference>
<dbReference type="CORUM" id="A2AM29"/>
<dbReference type="DIP" id="DIP-60099N"/>
<dbReference type="FunCoup" id="A2AM29">
    <property type="interactions" value="3306"/>
</dbReference>
<dbReference type="IntAct" id="A2AM29">
    <property type="interactions" value="4"/>
</dbReference>
<dbReference type="STRING" id="10090.ENSMUSP00000077232"/>
<dbReference type="iPTMnet" id="A2AM29"/>
<dbReference type="PhosphoSitePlus" id="A2AM29"/>
<dbReference type="SwissPalm" id="A2AM29"/>
<dbReference type="jPOST" id="A2AM29"/>
<dbReference type="PaxDb" id="10090-ENSMUSP00000077232"/>
<dbReference type="PeptideAtlas" id="A2AM29"/>
<dbReference type="ProteomicsDB" id="285560"/>
<dbReference type="Pumba" id="A2AM29"/>
<dbReference type="Antibodypedia" id="1068">
    <property type="antibodies" value="292 antibodies from 29 providers"/>
</dbReference>
<dbReference type="DNASU" id="70122"/>
<dbReference type="Ensembl" id="ENSMUST00000078090.12">
    <property type="protein sequence ID" value="ENSMUSP00000077232.6"/>
    <property type="gene ID" value="ENSMUSG00000028496.18"/>
</dbReference>
<dbReference type="GeneID" id="70122"/>
<dbReference type="KEGG" id="mmu:70122"/>
<dbReference type="UCSC" id="uc008tmp.1">
    <property type="organism name" value="mouse"/>
</dbReference>
<dbReference type="AGR" id="MGI:1917372"/>
<dbReference type="CTD" id="4300"/>
<dbReference type="MGI" id="MGI:1917372">
    <property type="gene designation" value="Mllt3"/>
</dbReference>
<dbReference type="VEuPathDB" id="HostDB:ENSMUSG00000028496"/>
<dbReference type="eggNOG" id="KOG3149">
    <property type="taxonomic scope" value="Eukaryota"/>
</dbReference>
<dbReference type="GeneTree" id="ENSGT00940000155903"/>
<dbReference type="HOGENOM" id="CLU_036086_0_0_1"/>
<dbReference type="InParanoid" id="A2AM29"/>
<dbReference type="OMA" id="MASSXCK"/>
<dbReference type="OrthoDB" id="10053467at2759"/>
<dbReference type="PhylomeDB" id="A2AM29"/>
<dbReference type="TreeFam" id="TF314586"/>
<dbReference type="Reactome" id="R-MMU-112382">
    <property type="pathway name" value="Formation of RNA Pol II elongation complex"/>
</dbReference>
<dbReference type="Reactome" id="R-MMU-674695">
    <property type="pathway name" value="RNA Polymerase II Pre-transcription Events"/>
</dbReference>
<dbReference type="Reactome" id="R-MMU-75955">
    <property type="pathway name" value="RNA Polymerase II Transcription Elongation"/>
</dbReference>
<dbReference type="BioGRID-ORCS" id="70122">
    <property type="hits" value="11 hits in 78 CRISPR screens"/>
</dbReference>
<dbReference type="ChiTaRS" id="Mllt3">
    <property type="organism name" value="mouse"/>
</dbReference>
<dbReference type="PRO" id="PR:A2AM29"/>
<dbReference type="Proteomes" id="UP000000589">
    <property type="component" value="Chromosome 4"/>
</dbReference>
<dbReference type="RNAct" id="A2AM29">
    <property type="molecule type" value="protein"/>
</dbReference>
<dbReference type="Bgee" id="ENSMUSG00000028496">
    <property type="expression patterns" value="Expressed in embryonic post-anal tail and 280 other cell types or tissues"/>
</dbReference>
<dbReference type="ExpressionAtlas" id="A2AM29">
    <property type="expression patterns" value="baseline and differential"/>
</dbReference>
<dbReference type="GO" id="GO:0005694">
    <property type="term" value="C:chromosome"/>
    <property type="evidence" value="ECO:0007669"/>
    <property type="project" value="UniProtKB-SubCell"/>
</dbReference>
<dbReference type="GO" id="GO:0005829">
    <property type="term" value="C:cytosol"/>
    <property type="evidence" value="ECO:0007669"/>
    <property type="project" value="Ensembl"/>
</dbReference>
<dbReference type="GO" id="GO:0005634">
    <property type="term" value="C:nucleus"/>
    <property type="evidence" value="ECO:0000314"/>
    <property type="project" value="MGI"/>
</dbReference>
<dbReference type="GO" id="GO:0008023">
    <property type="term" value="C:transcription elongation factor complex"/>
    <property type="evidence" value="ECO:0000250"/>
    <property type="project" value="UniProtKB"/>
</dbReference>
<dbReference type="GO" id="GO:0003682">
    <property type="term" value="F:chromatin binding"/>
    <property type="evidence" value="ECO:0000250"/>
    <property type="project" value="UniProtKB"/>
</dbReference>
<dbReference type="GO" id="GO:0003677">
    <property type="term" value="F:DNA binding"/>
    <property type="evidence" value="ECO:0007669"/>
    <property type="project" value="UniProtKB-KW"/>
</dbReference>
<dbReference type="GO" id="GO:0042393">
    <property type="term" value="F:histone binding"/>
    <property type="evidence" value="ECO:0000250"/>
    <property type="project" value="UniProtKB"/>
</dbReference>
<dbReference type="GO" id="GO:0140072">
    <property type="term" value="F:histone H3K9ac reader activity"/>
    <property type="evidence" value="ECO:0000250"/>
    <property type="project" value="UniProtKB"/>
</dbReference>
<dbReference type="GO" id="GO:0070577">
    <property type="term" value="F:lysine-acetylated histone binding"/>
    <property type="evidence" value="ECO:0007669"/>
    <property type="project" value="Ensembl"/>
</dbReference>
<dbReference type="GO" id="GO:0140030">
    <property type="term" value="F:modification-dependent protein binding"/>
    <property type="evidence" value="ECO:0000250"/>
    <property type="project" value="UniProtKB"/>
</dbReference>
<dbReference type="GO" id="GO:0009952">
    <property type="term" value="P:anterior/posterior pattern specification"/>
    <property type="evidence" value="ECO:0000315"/>
    <property type="project" value="MGI"/>
</dbReference>
<dbReference type="GO" id="GO:0010467">
    <property type="term" value="P:gene expression"/>
    <property type="evidence" value="ECO:0000314"/>
    <property type="project" value="MGI"/>
</dbReference>
<dbReference type="GO" id="GO:0060218">
    <property type="term" value="P:hematopoietic stem cell differentiation"/>
    <property type="evidence" value="ECO:0000250"/>
    <property type="project" value="UniProtKB"/>
</dbReference>
<dbReference type="GO" id="GO:0090090">
    <property type="term" value="P:negative regulation of canonical Wnt signaling pathway"/>
    <property type="evidence" value="ECO:0000266"/>
    <property type="project" value="MGI"/>
</dbReference>
<dbReference type="GO" id="GO:0045893">
    <property type="term" value="P:positive regulation of DNA-templated transcription"/>
    <property type="evidence" value="ECO:0000250"/>
    <property type="project" value="UniProtKB"/>
</dbReference>
<dbReference type="GO" id="GO:2000096">
    <property type="term" value="P:positive regulation of Wnt signaling pathway, planar cell polarity pathway"/>
    <property type="evidence" value="ECO:0000266"/>
    <property type="project" value="MGI"/>
</dbReference>
<dbReference type="GO" id="GO:1902275">
    <property type="term" value="P:regulation of chromatin organization"/>
    <property type="evidence" value="ECO:0000250"/>
    <property type="project" value="UniProtKB"/>
</dbReference>
<dbReference type="GO" id="GO:2000035">
    <property type="term" value="P:regulation of stem cell division"/>
    <property type="evidence" value="ECO:0000250"/>
    <property type="project" value="UniProtKB"/>
</dbReference>
<dbReference type="GO" id="GO:0007379">
    <property type="term" value="P:segment specification"/>
    <property type="evidence" value="ECO:0000315"/>
    <property type="project" value="MGI"/>
</dbReference>
<dbReference type="CDD" id="cd16906">
    <property type="entry name" value="YEATS_AF-9_like"/>
    <property type="match status" value="1"/>
</dbReference>
<dbReference type="FunFam" id="2.60.40.1970:FF:000003">
    <property type="entry name" value="MLLT1, super elongation complex subunit"/>
    <property type="match status" value="1"/>
</dbReference>
<dbReference type="FunFam" id="1.20.1270.290:FF:000001">
    <property type="entry name" value="MLLT3, super elongation complex subunit"/>
    <property type="match status" value="1"/>
</dbReference>
<dbReference type="Gene3D" id="1.20.1270.290">
    <property type="match status" value="1"/>
</dbReference>
<dbReference type="Gene3D" id="2.60.40.1970">
    <property type="entry name" value="YEATS domain"/>
    <property type="match status" value="1"/>
</dbReference>
<dbReference type="InterPro" id="IPR040930">
    <property type="entry name" value="AF-9_AHD"/>
</dbReference>
<dbReference type="InterPro" id="IPR038704">
    <property type="entry name" value="YEAST_sf"/>
</dbReference>
<dbReference type="InterPro" id="IPR055129">
    <property type="entry name" value="YEATS_dom"/>
</dbReference>
<dbReference type="InterPro" id="IPR052790">
    <property type="entry name" value="YEATS_domain"/>
</dbReference>
<dbReference type="PANTHER" id="PTHR47827">
    <property type="entry name" value="AHD DOMAIN-CONTAINING PROTEIN"/>
    <property type="match status" value="1"/>
</dbReference>
<dbReference type="PANTHER" id="PTHR47827:SF5">
    <property type="entry name" value="PROTEIN AF-9"/>
    <property type="match status" value="1"/>
</dbReference>
<dbReference type="Pfam" id="PF17793">
    <property type="entry name" value="AHD"/>
    <property type="match status" value="1"/>
</dbReference>
<dbReference type="Pfam" id="PF03366">
    <property type="entry name" value="YEATS"/>
    <property type="match status" value="1"/>
</dbReference>
<dbReference type="PROSITE" id="PS51037">
    <property type="entry name" value="YEATS"/>
    <property type="match status" value="1"/>
</dbReference>
<evidence type="ECO:0000250" key="1">
    <source>
        <dbReference type="UniProtKB" id="P42568"/>
    </source>
</evidence>
<evidence type="ECO:0000255" key="2"/>
<evidence type="ECO:0000255" key="3">
    <source>
        <dbReference type="PROSITE-ProRule" id="PRU00376"/>
    </source>
</evidence>
<evidence type="ECO:0000256" key="4">
    <source>
        <dbReference type="SAM" id="MobiDB-lite"/>
    </source>
</evidence>
<evidence type="ECO:0000269" key="5">
    <source>
    </source>
</evidence>
<evidence type="ECO:0000305" key="6"/>
<evidence type="ECO:0007744" key="7">
    <source>
    </source>
</evidence>
<feature type="chain" id="PRO_0000305124" description="Protein AF-9">
    <location>
        <begin position="1"/>
        <end position="569"/>
    </location>
</feature>
<feature type="domain" description="YEATS" evidence="3">
    <location>
        <begin position="1"/>
        <end position="138"/>
    </location>
</feature>
<feature type="region of interest" description="Disordered" evidence="4">
    <location>
        <begin position="138"/>
        <end position="476"/>
    </location>
</feature>
<feature type="short sequence motif" description="Nuclear localization signal" evidence="2">
    <location>
        <begin position="296"/>
        <end position="301"/>
    </location>
</feature>
<feature type="compositionally biased region" description="Low complexity" evidence="4">
    <location>
        <begin position="149"/>
        <end position="190"/>
    </location>
</feature>
<feature type="compositionally biased region" description="Basic and acidic residues" evidence="4">
    <location>
        <begin position="202"/>
        <end position="265"/>
    </location>
</feature>
<feature type="compositionally biased region" description="Low complexity" evidence="4">
    <location>
        <begin position="304"/>
        <end position="314"/>
    </location>
</feature>
<feature type="compositionally biased region" description="Basic and acidic residues" evidence="4">
    <location>
        <begin position="323"/>
        <end position="350"/>
    </location>
</feature>
<feature type="compositionally biased region" description="Acidic residues" evidence="4">
    <location>
        <begin position="358"/>
        <end position="369"/>
    </location>
</feature>
<feature type="compositionally biased region" description="Low complexity" evidence="4">
    <location>
        <begin position="372"/>
        <end position="396"/>
    </location>
</feature>
<feature type="compositionally biased region" description="Acidic residues" evidence="4">
    <location>
        <begin position="415"/>
        <end position="430"/>
    </location>
</feature>
<feature type="compositionally biased region" description="Low complexity" evidence="4">
    <location>
        <begin position="446"/>
        <end position="462"/>
    </location>
</feature>
<feature type="modified residue" description="Phosphoserine" evidence="1">
    <location>
        <position position="289"/>
    </location>
</feature>
<feature type="modified residue" description="Phosphoserine" evidence="1">
    <location>
        <position position="295"/>
    </location>
</feature>
<feature type="modified residue" description="Phosphoserine" evidence="7">
    <location>
        <position position="413"/>
    </location>
</feature>
<feature type="modified residue" description="Phosphoserine" evidence="1">
    <location>
        <position position="420"/>
    </location>
</feature>
<feature type="modified residue" description="Phosphoserine" evidence="1">
    <location>
        <position position="484"/>
    </location>
</feature>
<feature type="cross-link" description="Glycyl lysine isopeptide (Lys-Gly) (interchain with G-Cter in SUMO2)" evidence="1">
    <location>
        <position position="340"/>
    </location>
</feature>
<feature type="sequence conflict" description="In Ref. 3; AAK28536." evidence="6" ref="3">
    <original>S</original>
    <variation>G</variation>
    <location>
        <position position="157"/>
    </location>
</feature>
<feature type="sequence conflict" description="In Ref. 3; AAK28536." evidence="6" ref="3">
    <original>S</original>
    <variation>G</variation>
    <location>
        <position position="164"/>
    </location>
</feature>
<feature type="sequence conflict" description="In Ref. 3; AAK28536." evidence="6" ref="3">
    <original>S</original>
    <variation>N</variation>
    <location>
        <position position="172"/>
    </location>
</feature>
<feature type="sequence conflict" description="In Ref. 3; AAK28536." evidence="6" ref="3">
    <original>S</original>
    <variation>G</variation>
    <location>
        <position position="176"/>
    </location>
</feature>
<feature type="sequence conflict" description="In Ref. 2; AAH21420." evidence="6" ref="2">
    <location>
        <begin position="179"/>
        <end position="190"/>
    </location>
</feature>
<feature type="sequence conflict" description="In Ref. 2; AAH21420." evidence="6" ref="2">
    <original>M</original>
    <variation>T</variation>
    <location>
        <position position="352"/>
    </location>
</feature>
<sequence>MASSCAVQVKLELGHRAQVRKKPTVEGFTHDWMVFVRGPEHSNIQHFVEKVVFHLHESFPRPKRVCKDPPYKVEESGYAGFILPIEVYFKNKEEPKKVRFDYDLFLHLEGHPPVNHLRCEKLTFNNPTEDFRRKLLKAGGDPNRSIHTSSSSSSSSSSSSSSSSSSSSSSSSSSSSSSSSSSSSSSSSSSTSFSKPHKLMKEHKEKPSKDSREHKSAFKEPSRDHNKSSKDSSKKPKENKPLKEEKIVPKMAFKEPKPMSKEPKADSNLLTVTSGQQDKKAPSKRPPASDSEELSAKKRKKSSSEALFKSFSSAPPLILTCSADKKQIKDKSHVKMGKVKIESETSEKKKSMLPPFDDIVDPNDSDVEENMSSKSDSEQPSPASSSSSSSSSFTPSQTRQQGPLRSIMKDLHSDDNEEESDEAEDNDNDSEMERPVNRGGSRSRRVSLSDGSDSESSSASSPLHHEPPPPLLKTNNNQILEVKSPIKQSKSDKQIKNGECDKAYLDELVELHRRLMTLRERHILQQIVNLIEETGHFHITNTTFDFDLCSLDKTTVRKLQSYLETSGTS</sequence>
<organism>
    <name type="scientific">Mus musculus</name>
    <name type="common">Mouse</name>
    <dbReference type="NCBI Taxonomy" id="10090"/>
    <lineage>
        <taxon>Eukaryota</taxon>
        <taxon>Metazoa</taxon>
        <taxon>Chordata</taxon>
        <taxon>Craniata</taxon>
        <taxon>Vertebrata</taxon>
        <taxon>Euteleostomi</taxon>
        <taxon>Mammalia</taxon>
        <taxon>Eutheria</taxon>
        <taxon>Euarchontoglires</taxon>
        <taxon>Glires</taxon>
        <taxon>Rodentia</taxon>
        <taxon>Myomorpha</taxon>
        <taxon>Muroidea</taxon>
        <taxon>Muridae</taxon>
        <taxon>Murinae</taxon>
        <taxon>Mus</taxon>
        <taxon>Mus</taxon>
    </lineage>
</organism>
<name>AF9_MOUSE</name>
<protein>
    <recommendedName>
        <fullName>Protein AF-9</fullName>
    </recommendedName>
    <alternativeName>
        <fullName>Myeloid/lymphoid or mixed-lineage leukemia translocated to chromosome 3 protein homolog</fullName>
    </alternativeName>
</protein>